<gene>
    <name type="primary">Or9a</name>
    <name type="ORF">CG15302</name>
</gene>
<name>OR9A_DROME</name>
<feature type="chain" id="PRO_0000174227" description="Odorant receptor 9a">
    <location>
        <begin position="1"/>
        <end position="392"/>
    </location>
</feature>
<feature type="topological domain" description="Cytoplasmic" evidence="2">
    <location>
        <begin position="1"/>
        <end position="41"/>
    </location>
</feature>
<feature type="transmembrane region" description="Helical; Name=1" evidence="2">
    <location>
        <begin position="42"/>
        <end position="62"/>
    </location>
</feature>
<feature type="topological domain" description="Extracellular" evidence="2">
    <location>
        <begin position="63"/>
        <end position="74"/>
    </location>
</feature>
<feature type="transmembrane region" description="Helical; Name=2" evidence="2">
    <location>
        <begin position="75"/>
        <end position="95"/>
    </location>
</feature>
<feature type="topological domain" description="Cytoplasmic" evidence="2">
    <location>
        <begin position="96"/>
        <end position="141"/>
    </location>
</feature>
<feature type="transmembrane region" description="Helical; Name=3" evidence="2">
    <location>
        <begin position="142"/>
        <end position="162"/>
    </location>
</feature>
<feature type="topological domain" description="Extracellular" evidence="2">
    <location>
        <begin position="163"/>
        <end position="202"/>
    </location>
</feature>
<feature type="transmembrane region" description="Helical; Name=4" evidence="2">
    <location>
        <begin position="203"/>
        <end position="223"/>
    </location>
</feature>
<feature type="topological domain" description="Cytoplasmic" evidence="2">
    <location>
        <begin position="224"/>
        <end position="268"/>
    </location>
</feature>
<feature type="transmembrane region" description="Helical; Name=5" evidence="2">
    <location>
        <begin position="269"/>
        <end position="289"/>
    </location>
</feature>
<feature type="topological domain" description="Extracellular" evidence="2">
    <location>
        <begin position="290"/>
        <end position="297"/>
    </location>
</feature>
<feature type="transmembrane region" description="Helical; Name=6" evidence="2">
    <location>
        <begin position="298"/>
        <end position="318"/>
    </location>
</feature>
<feature type="topological domain" description="Cytoplasmic" evidence="2">
    <location>
        <begin position="319"/>
        <end position="362"/>
    </location>
</feature>
<feature type="transmembrane region" description="Helical; Name=7" evidence="2">
    <location>
        <begin position="363"/>
        <end position="383"/>
    </location>
</feature>
<feature type="topological domain" description="Extracellular" evidence="2">
    <location>
        <begin position="384"/>
        <end position="392"/>
    </location>
</feature>
<reference key="1">
    <citation type="journal article" date="2000" name="Science">
        <title>The genome sequence of Drosophila melanogaster.</title>
        <authorList>
            <person name="Adams M.D."/>
            <person name="Celniker S.E."/>
            <person name="Holt R.A."/>
            <person name="Evans C.A."/>
            <person name="Gocayne J.D."/>
            <person name="Amanatides P.G."/>
            <person name="Scherer S.E."/>
            <person name="Li P.W."/>
            <person name="Hoskins R.A."/>
            <person name="Galle R.F."/>
            <person name="George R.A."/>
            <person name="Lewis S.E."/>
            <person name="Richards S."/>
            <person name="Ashburner M."/>
            <person name="Henderson S.N."/>
            <person name="Sutton G.G."/>
            <person name="Wortman J.R."/>
            <person name="Yandell M.D."/>
            <person name="Zhang Q."/>
            <person name="Chen L.X."/>
            <person name="Brandon R.C."/>
            <person name="Rogers Y.-H.C."/>
            <person name="Blazej R.G."/>
            <person name="Champe M."/>
            <person name="Pfeiffer B.D."/>
            <person name="Wan K.H."/>
            <person name="Doyle C."/>
            <person name="Baxter E.G."/>
            <person name="Helt G."/>
            <person name="Nelson C.R."/>
            <person name="Miklos G.L.G."/>
            <person name="Abril J.F."/>
            <person name="Agbayani A."/>
            <person name="An H.-J."/>
            <person name="Andrews-Pfannkoch C."/>
            <person name="Baldwin D."/>
            <person name="Ballew R.M."/>
            <person name="Basu A."/>
            <person name="Baxendale J."/>
            <person name="Bayraktaroglu L."/>
            <person name="Beasley E.M."/>
            <person name="Beeson K.Y."/>
            <person name="Benos P.V."/>
            <person name="Berman B.P."/>
            <person name="Bhandari D."/>
            <person name="Bolshakov S."/>
            <person name="Borkova D."/>
            <person name="Botchan M.R."/>
            <person name="Bouck J."/>
            <person name="Brokstein P."/>
            <person name="Brottier P."/>
            <person name="Burtis K.C."/>
            <person name="Busam D.A."/>
            <person name="Butler H."/>
            <person name="Cadieu E."/>
            <person name="Center A."/>
            <person name="Chandra I."/>
            <person name="Cherry J.M."/>
            <person name="Cawley S."/>
            <person name="Dahlke C."/>
            <person name="Davenport L.B."/>
            <person name="Davies P."/>
            <person name="de Pablos B."/>
            <person name="Delcher A."/>
            <person name="Deng Z."/>
            <person name="Mays A.D."/>
            <person name="Dew I."/>
            <person name="Dietz S.M."/>
            <person name="Dodson K."/>
            <person name="Doup L.E."/>
            <person name="Downes M."/>
            <person name="Dugan-Rocha S."/>
            <person name="Dunkov B.C."/>
            <person name="Dunn P."/>
            <person name="Durbin K.J."/>
            <person name="Evangelista C.C."/>
            <person name="Ferraz C."/>
            <person name="Ferriera S."/>
            <person name="Fleischmann W."/>
            <person name="Fosler C."/>
            <person name="Gabrielian A.E."/>
            <person name="Garg N.S."/>
            <person name="Gelbart W.M."/>
            <person name="Glasser K."/>
            <person name="Glodek A."/>
            <person name="Gong F."/>
            <person name="Gorrell J.H."/>
            <person name="Gu Z."/>
            <person name="Guan P."/>
            <person name="Harris M."/>
            <person name="Harris N.L."/>
            <person name="Harvey D.A."/>
            <person name="Heiman T.J."/>
            <person name="Hernandez J.R."/>
            <person name="Houck J."/>
            <person name="Hostin D."/>
            <person name="Houston K.A."/>
            <person name="Howland T.J."/>
            <person name="Wei M.-H."/>
            <person name="Ibegwam C."/>
            <person name="Jalali M."/>
            <person name="Kalush F."/>
            <person name="Karpen G.H."/>
            <person name="Ke Z."/>
            <person name="Kennison J.A."/>
            <person name="Ketchum K.A."/>
            <person name="Kimmel B.E."/>
            <person name="Kodira C.D."/>
            <person name="Kraft C.L."/>
            <person name="Kravitz S."/>
            <person name="Kulp D."/>
            <person name="Lai Z."/>
            <person name="Lasko P."/>
            <person name="Lei Y."/>
            <person name="Levitsky A.A."/>
            <person name="Li J.H."/>
            <person name="Li Z."/>
            <person name="Liang Y."/>
            <person name="Lin X."/>
            <person name="Liu X."/>
            <person name="Mattei B."/>
            <person name="McIntosh T.C."/>
            <person name="McLeod M.P."/>
            <person name="McPherson D."/>
            <person name="Merkulov G."/>
            <person name="Milshina N.V."/>
            <person name="Mobarry C."/>
            <person name="Morris J."/>
            <person name="Moshrefi A."/>
            <person name="Mount S.M."/>
            <person name="Moy M."/>
            <person name="Murphy B."/>
            <person name="Murphy L."/>
            <person name="Muzny D.M."/>
            <person name="Nelson D.L."/>
            <person name="Nelson D.R."/>
            <person name="Nelson K.A."/>
            <person name="Nixon K."/>
            <person name="Nusskern D.R."/>
            <person name="Pacleb J.M."/>
            <person name="Palazzolo M."/>
            <person name="Pittman G.S."/>
            <person name="Pan S."/>
            <person name="Pollard J."/>
            <person name="Puri V."/>
            <person name="Reese M.G."/>
            <person name="Reinert K."/>
            <person name="Remington K."/>
            <person name="Saunders R.D.C."/>
            <person name="Scheeler F."/>
            <person name="Shen H."/>
            <person name="Shue B.C."/>
            <person name="Siden-Kiamos I."/>
            <person name="Simpson M."/>
            <person name="Skupski M.P."/>
            <person name="Smith T.J."/>
            <person name="Spier E."/>
            <person name="Spradling A.C."/>
            <person name="Stapleton M."/>
            <person name="Strong R."/>
            <person name="Sun E."/>
            <person name="Svirskas R."/>
            <person name="Tector C."/>
            <person name="Turner R."/>
            <person name="Venter E."/>
            <person name="Wang A.H."/>
            <person name="Wang X."/>
            <person name="Wang Z.-Y."/>
            <person name="Wassarman D.A."/>
            <person name="Weinstock G.M."/>
            <person name="Weissenbach J."/>
            <person name="Williams S.M."/>
            <person name="Woodage T."/>
            <person name="Worley K.C."/>
            <person name="Wu D."/>
            <person name="Yang S."/>
            <person name="Yao Q.A."/>
            <person name="Ye J."/>
            <person name="Yeh R.-F."/>
            <person name="Zaveri J.S."/>
            <person name="Zhan M."/>
            <person name="Zhang G."/>
            <person name="Zhao Q."/>
            <person name="Zheng L."/>
            <person name="Zheng X.H."/>
            <person name="Zhong F.N."/>
            <person name="Zhong W."/>
            <person name="Zhou X."/>
            <person name="Zhu S.C."/>
            <person name="Zhu X."/>
            <person name="Smith H.O."/>
            <person name="Gibbs R.A."/>
            <person name="Myers E.W."/>
            <person name="Rubin G.M."/>
            <person name="Venter J.C."/>
        </authorList>
    </citation>
    <scope>NUCLEOTIDE SEQUENCE [LARGE SCALE GENOMIC DNA]</scope>
    <source>
        <strain>Berkeley</strain>
    </source>
</reference>
<reference key="2">
    <citation type="journal article" date="2002" name="Genome Biol.">
        <title>Annotation of the Drosophila melanogaster euchromatic genome: a systematic review.</title>
        <authorList>
            <person name="Misra S."/>
            <person name="Crosby M.A."/>
            <person name="Mungall C.J."/>
            <person name="Matthews B.B."/>
            <person name="Campbell K.S."/>
            <person name="Hradecky P."/>
            <person name="Huang Y."/>
            <person name="Kaminker J.S."/>
            <person name="Millburn G.H."/>
            <person name="Prochnik S.E."/>
            <person name="Smith C.D."/>
            <person name="Tupy J.L."/>
            <person name="Whitfield E.J."/>
            <person name="Bayraktaroglu L."/>
            <person name="Berman B.P."/>
            <person name="Bettencourt B.R."/>
            <person name="Celniker S.E."/>
            <person name="de Grey A.D.N.J."/>
            <person name="Drysdale R.A."/>
            <person name="Harris N.L."/>
            <person name="Richter J."/>
            <person name="Russo S."/>
            <person name="Schroeder A.J."/>
            <person name="Shu S.Q."/>
            <person name="Stapleton M."/>
            <person name="Yamada C."/>
            <person name="Ashburner M."/>
            <person name="Gelbart W.M."/>
            <person name="Rubin G.M."/>
            <person name="Lewis S.E."/>
        </authorList>
    </citation>
    <scope>GENOME REANNOTATION</scope>
    <source>
        <strain>Berkeley</strain>
    </source>
</reference>
<reference key="3">
    <citation type="journal article" date="2000" name="Cell">
        <title>An olfactory sensory map in the fly brain.</title>
        <authorList>
            <person name="Vosshall L.B."/>
            <person name="Wong A.M."/>
            <person name="Axel R."/>
        </authorList>
    </citation>
    <scope>TISSUE SPECIFICITY</scope>
</reference>
<reference key="4">
    <citation type="journal article" date="2006" name="Cell">
        <title>Coding of odors by a receptor repertoire.</title>
        <authorList>
            <person name="Hallem E.A."/>
            <person name="Carlson J.R."/>
        </authorList>
    </citation>
    <scope>FUNCTION</scope>
</reference>
<reference key="5">
    <citation type="journal article" date="2011" name="Mol. Cell. Neurosci.">
        <title>Disruption of olfactory receptor neuron patterning in Scutoid mutant Drosophila.</title>
        <authorList>
            <person name="Tom W."/>
            <person name="de Bruyne M."/>
            <person name="Haehnel M."/>
            <person name="Carlson J.R."/>
            <person name="Ray A."/>
        </authorList>
    </citation>
    <scope>TISSUE SPECIFICITY</scope>
</reference>
<protein>
    <recommendedName>
        <fullName>Odorant receptor 9a</fullName>
    </recommendedName>
</protein>
<proteinExistence type="evidence at transcript level"/>
<accession>Q9W2U9</accession>
<dbReference type="EMBL" id="AE014298">
    <property type="protein sequence ID" value="AAF46589.1"/>
    <property type="molecule type" value="Genomic_DNA"/>
</dbReference>
<dbReference type="RefSeq" id="NP_511107.1">
    <property type="nucleotide sequence ID" value="NM_078552.3"/>
</dbReference>
<dbReference type="SMR" id="Q9W2U9"/>
<dbReference type="BioGRID" id="58403">
    <property type="interactions" value="5"/>
</dbReference>
<dbReference type="DIP" id="DIP-19120N"/>
<dbReference type="FunCoup" id="Q9W2U9">
    <property type="interactions" value="8"/>
</dbReference>
<dbReference type="IntAct" id="Q9W2U9">
    <property type="interactions" value="1"/>
</dbReference>
<dbReference type="STRING" id="7227.FBpp0071396"/>
<dbReference type="PaxDb" id="7227-FBpp0071396"/>
<dbReference type="EnsemblMetazoa" id="FBtr0071462">
    <property type="protein sequence ID" value="FBpp0071396"/>
    <property type="gene ID" value="FBgn0030204"/>
</dbReference>
<dbReference type="GeneID" id="31975"/>
<dbReference type="KEGG" id="dme:Dmel_CG15302"/>
<dbReference type="AGR" id="FB:FBgn0030204"/>
<dbReference type="CTD" id="31975"/>
<dbReference type="FlyBase" id="FBgn0030204">
    <property type="gene designation" value="Or9a"/>
</dbReference>
<dbReference type="VEuPathDB" id="VectorBase:FBgn0030204"/>
<dbReference type="eggNOG" id="ENOG502T9BC">
    <property type="taxonomic scope" value="Eukaryota"/>
</dbReference>
<dbReference type="GeneTree" id="ENSGT00940000168837"/>
<dbReference type="HOGENOM" id="CLU_033399_7_1_1"/>
<dbReference type="InParanoid" id="Q9W2U9"/>
<dbReference type="OMA" id="MALCVDT"/>
<dbReference type="OrthoDB" id="6614360at2759"/>
<dbReference type="PhylomeDB" id="Q9W2U9"/>
<dbReference type="BioGRID-ORCS" id="31975">
    <property type="hits" value="0 hits in 1 CRISPR screen"/>
</dbReference>
<dbReference type="GenomeRNAi" id="31975"/>
<dbReference type="PRO" id="PR:Q9W2U9"/>
<dbReference type="Proteomes" id="UP000000803">
    <property type="component" value="Chromosome X"/>
</dbReference>
<dbReference type="Bgee" id="FBgn0030204">
    <property type="expression patterns" value="Expressed in antenna and 3 other cell types or tissues"/>
</dbReference>
<dbReference type="GO" id="GO:0032590">
    <property type="term" value="C:dendrite membrane"/>
    <property type="evidence" value="ECO:0000250"/>
    <property type="project" value="FlyBase"/>
</dbReference>
<dbReference type="GO" id="GO:0005886">
    <property type="term" value="C:plasma membrane"/>
    <property type="evidence" value="ECO:0007005"/>
    <property type="project" value="FlyBase"/>
</dbReference>
<dbReference type="GO" id="GO:0170020">
    <property type="term" value="F:ionotropic olfactory receptor activity"/>
    <property type="evidence" value="ECO:0007005"/>
    <property type="project" value="FlyBase"/>
</dbReference>
<dbReference type="GO" id="GO:0005549">
    <property type="term" value="F:odorant binding"/>
    <property type="evidence" value="ECO:0000250"/>
    <property type="project" value="FlyBase"/>
</dbReference>
<dbReference type="GO" id="GO:0004984">
    <property type="term" value="F:olfactory receptor activity"/>
    <property type="evidence" value="ECO:0000318"/>
    <property type="project" value="GO_Central"/>
</dbReference>
<dbReference type="GO" id="GO:0050911">
    <property type="term" value="P:detection of chemical stimulus involved in sensory perception of smell"/>
    <property type="evidence" value="ECO:0007005"/>
    <property type="project" value="FlyBase"/>
</dbReference>
<dbReference type="GO" id="GO:0007165">
    <property type="term" value="P:signal transduction"/>
    <property type="evidence" value="ECO:0007669"/>
    <property type="project" value="UniProtKB-KW"/>
</dbReference>
<dbReference type="InterPro" id="IPR004117">
    <property type="entry name" value="7tm6_olfct_rcpt"/>
</dbReference>
<dbReference type="PANTHER" id="PTHR21137">
    <property type="entry name" value="ODORANT RECEPTOR"/>
    <property type="match status" value="1"/>
</dbReference>
<dbReference type="PANTHER" id="PTHR21137:SF43">
    <property type="entry name" value="ODORANT RECEPTOR 47A-RELATED"/>
    <property type="match status" value="1"/>
</dbReference>
<dbReference type="Pfam" id="PF02949">
    <property type="entry name" value="7tm_6"/>
    <property type="match status" value="1"/>
</dbReference>
<organism>
    <name type="scientific">Drosophila melanogaster</name>
    <name type="common">Fruit fly</name>
    <dbReference type="NCBI Taxonomy" id="7227"/>
    <lineage>
        <taxon>Eukaryota</taxon>
        <taxon>Metazoa</taxon>
        <taxon>Ecdysozoa</taxon>
        <taxon>Arthropoda</taxon>
        <taxon>Hexapoda</taxon>
        <taxon>Insecta</taxon>
        <taxon>Pterygota</taxon>
        <taxon>Neoptera</taxon>
        <taxon>Endopterygota</taxon>
        <taxon>Diptera</taxon>
        <taxon>Brachycera</taxon>
        <taxon>Muscomorpha</taxon>
        <taxon>Ephydroidea</taxon>
        <taxon>Drosophilidae</taxon>
        <taxon>Drosophila</taxon>
        <taxon>Sophophora</taxon>
    </lineage>
</organism>
<keyword id="KW-1003">Cell membrane</keyword>
<keyword id="KW-0472">Membrane</keyword>
<keyword id="KW-0552">Olfaction</keyword>
<keyword id="KW-0675">Receptor</keyword>
<keyword id="KW-1185">Reference proteome</keyword>
<keyword id="KW-0716">Sensory transduction</keyword>
<keyword id="KW-0807">Transducer</keyword>
<keyword id="KW-0812">Transmembrane</keyword>
<keyword id="KW-1133">Transmembrane helix</keyword>
<sequence length="392" mass="44623">MSDKVKGKKQEEKDQSLRVQILVYRCMGIDLWSPTMANDRPWLTFVTMGPLFLFMVPMFLAAHEYITQVSLLSDTLGSTFASMLTLVKFLLFCYHRKEFVGLIYHIRAILAKEIEVWPDAREIIEVENQSDQMLSLTYTRCFGLAGIFAALKPFVGIILSSIRGDEIHLELPHNGVYPYDLQVVMFYVPTYLWNVMASYSAVTMALCVDSLLFFFTYNVCAIFKIAKHRMIHLPAVGGKEELEGLVQVLLLHQKGLQIADHIADKYRPLIFLQFFLSALQICFIGFQVADLFPNPQSLYFIAFVGSLLIALFIYSKCGENIKSASLDFGNGLYETNWTDFSPPTKRALLIAAMRAQRPCQMKGYFFEASMATFSTIVRSAVSYIMMLRSFNA</sequence>
<comment type="function">
    <text evidence="4">Odorant receptor which mediates acceptance or avoidance behavior, depending on its substrates. The odorant receptor repertoire encodes a large collection of odor stimuli that vary widely in identity, intensity, and duration. May form a complex with Orco to form odorant-sensing units, providing sensitive and prolonged odorant signaling and calcium permeability.</text>
</comment>
<comment type="subunit">
    <text evidence="1">Interacts with Orco. Complexes exist early in the endomembrane system in olfactory sensory neurons (OSNs), coupling these complexes to the conserved ciliary trafficking pathway (By similarity).</text>
</comment>
<comment type="subcellular location">
    <subcellularLocation>
        <location evidence="1">Cell membrane</location>
        <topology evidence="1">Multi-pass membrane protein</topology>
    </subcellularLocation>
</comment>
<comment type="tissue specificity">
    <text evidence="3 5">Expressed in olfactory sensory neurons in the antenna.</text>
</comment>
<comment type="miscellaneous">
    <text>The atypical heteromeric and topological design of the odorant receptors appears to be an insect-specific solution for odor recognition, making the OR/Orco complex an attractive target for the development of highly selective insect repellents to disrupt olfactory-mediated host-seeking behaviors of insect disease vectors. Odor-evoked OR currents are independent of known G-protein-coupled second messenger pathways.</text>
</comment>
<comment type="similarity">
    <text evidence="6">Belongs to the insect chemoreceptor superfamily. Heteromeric odorant receptor channel (TC 1.A.69) family. Or1a subfamily.</text>
</comment>
<evidence type="ECO:0000250" key="1"/>
<evidence type="ECO:0000255" key="2"/>
<evidence type="ECO:0000269" key="3">
    <source>
    </source>
</evidence>
<evidence type="ECO:0000269" key="4">
    <source>
    </source>
</evidence>
<evidence type="ECO:0000269" key="5">
    <source>
    </source>
</evidence>
<evidence type="ECO:0000305" key="6"/>